<evidence type="ECO:0000255" key="1">
    <source>
        <dbReference type="PROSITE-ProRule" id="PRU00209"/>
    </source>
</evidence>
<protein>
    <recommendedName>
        <fullName>Putative tRNA-binding protein YtpR</fullName>
    </recommendedName>
    <alternativeName>
        <fullName>Partial phenylalanyl-tRNA synthetase</fullName>
        <shortName>Partial PheRS</shortName>
        <shortName>pFRS</shortName>
    </alternativeName>
</protein>
<dbReference type="EMBL" id="AF008220">
    <property type="protein sequence ID" value="AAC00291.1"/>
    <property type="molecule type" value="Genomic_DNA"/>
</dbReference>
<dbReference type="EMBL" id="AL009126">
    <property type="protein sequence ID" value="CAB14960.1"/>
    <property type="molecule type" value="Genomic_DNA"/>
</dbReference>
<dbReference type="PIR" id="A69999">
    <property type="entry name" value="A69999"/>
</dbReference>
<dbReference type="RefSeq" id="NP_390860.1">
    <property type="nucleotide sequence ID" value="NC_000964.3"/>
</dbReference>
<dbReference type="RefSeq" id="WP_003229269.1">
    <property type="nucleotide sequence ID" value="NZ_OZ025638.1"/>
</dbReference>
<dbReference type="SMR" id="O34943"/>
<dbReference type="FunCoup" id="O34943">
    <property type="interactions" value="61"/>
</dbReference>
<dbReference type="STRING" id="224308.BSU29820"/>
<dbReference type="jPOST" id="O34943"/>
<dbReference type="PaxDb" id="224308-BSU29820"/>
<dbReference type="EnsemblBacteria" id="CAB14960">
    <property type="protein sequence ID" value="CAB14960"/>
    <property type="gene ID" value="BSU_29820"/>
</dbReference>
<dbReference type="GeneID" id="937964"/>
<dbReference type="KEGG" id="bsu:BSU29820"/>
<dbReference type="PATRIC" id="fig|224308.179.peg.3239"/>
<dbReference type="eggNOG" id="COG0073">
    <property type="taxonomic scope" value="Bacteria"/>
</dbReference>
<dbReference type="InParanoid" id="O34943"/>
<dbReference type="OrthoDB" id="9805455at2"/>
<dbReference type="PhylomeDB" id="O34943"/>
<dbReference type="BioCyc" id="BSUB:BSU29820-MONOMER"/>
<dbReference type="Proteomes" id="UP000001570">
    <property type="component" value="Chromosome"/>
</dbReference>
<dbReference type="GO" id="GO:0000049">
    <property type="term" value="F:tRNA binding"/>
    <property type="evidence" value="ECO:0007669"/>
    <property type="project" value="UniProtKB-KW"/>
</dbReference>
<dbReference type="CDD" id="cd02796">
    <property type="entry name" value="tRNA_bind_bactPheRS"/>
    <property type="match status" value="1"/>
</dbReference>
<dbReference type="FunFam" id="2.40.50.140:FF:000045">
    <property type="entry name" value="Phenylalanine--tRNA ligase beta subunit"/>
    <property type="match status" value="1"/>
</dbReference>
<dbReference type="Gene3D" id="2.40.50.140">
    <property type="entry name" value="Nucleic acid-binding proteins"/>
    <property type="match status" value="1"/>
</dbReference>
<dbReference type="Gene3D" id="3.30.1940.10">
    <property type="entry name" value="YtpR-like"/>
    <property type="match status" value="1"/>
</dbReference>
<dbReference type="InterPro" id="IPR027855">
    <property type="entry name" value="DUF4479"/>
</dbReference>
<dbReference type="InterPro" id="IPR012340">
    <property type="entry name" value="NA-bd_OB-fold"/>
</dbReference>
<dbReference type="InterPro" id="IPR002547">
    <property type="entry name" value="tRNA-bd_dom"/>
</dbReference>
<dbReference type="InterPro" id="IPR033714">
    <property type="entry name" value="tRNA_bind_bactPheRS"/>
</dbReference>
<dbReference type="InterPro" id="IPR037154">
    <property type="entry name" value="YtpR-like_sf"/>
</dbReference>
<dbReference type="NCBIfam" id="NF045760">
    <property type="entry name" value="YtpR"/>
    <property type="match status" value="1"/>
</dbReference>
<dbReference type="Pfam" id="PF14794">
    <property type="entry name" value="DUF4479"/>
    <property type="match status" value="1"/>
</dbReference>
<dbReference type="Pfam" id="PF01588">
    <property type="entry name" value="tRNA_bind"/>
    <property type="match status" value="1"/>
</dbReference>
<dbReference type="SUPFAM" id="SSF50249">
    <property type="entry name" value="Nucleic acid-binding proteins"/>
    <property type="match status" value="1"/>
</dbReference>
<dbReference type="PROSITE" id="PS50886">
    <property type="entry name" value="TRBD"/>
    <property type="match status" value="1"/>
</dbReference>
<accession>O34943</accession>
<accession>Q795T3</accession>
<keyword id="KW-1185">Reference proteome</keyword>
<keyword id="KW-0694">RNA-binding</keyword>
<keyword id="KW-0820">tRNA-binding</keyword>
<sequence>MNAFYNKEGVGDTLLISLQDVTREQLGYEKHGDVVKIFNNETKETTGFNIFNASSYLTIDENGPVALSETFVQDVNEILNRNGVEETLVVDLSPKFVVGYVESKEKHPNADKLSVCKVNVGEETLQIVCGAPNVDQGQKVVVAKVGAVMPSGLVIKDAELRGVPSSGMICSAKELDLPDAPAEKGILVLEGDYEAGDAFQF</sequence>
<organism>
    <name type="scientific">Bacillus subtilis (strain 168)</name>
    <dbReference type="NCBI Taxonomy" id="224308"/>
    <lineage>
        <taxon>Bacteria</taxon>
        <taxon>Bacillati</taxon>
        <taxon>Bacillota</taxon>
        <taxon>Bacilli</taxon>
        <taxon>Bacillales</taxon>
        <taxon>Bacillaceae</taxon>
        <taxon>Bacillus</taxon>
    </lineage>
</organism>
<proteinExistence type="predicted"/>
<feature type="chain" id="PRO_0000361999" description="Putative tRNA-binding protein YtpR">
    <location>
        <begin position="1"/>
        <end position="201"/>
    </location>
</feature>
<feature type="domain" description="tRNA-binding" evidence="1">
    <location>
        <begin position="90"/>
        <end position="200"/>
    </location>
</feature>
<reference key="1">
    <citation type="journal article" date="1997" name="Microbiology">
        <title>Sequencing and functional annotation of the Bacillus subtilis genes in the 200 kb rrnB-dnaB region.</title>
        <authorList>
            <person name="Lapidus A."/>
            <person name="Galleron N."/>
            <person name="Sorokin A."/>
            <person name="Ehrlich S.D."/>
        </authorList>
    </citation>
    <scope>NUCLEOTIDE SEQUENCE [GENOMIC DNA]</scope>
</reference>
<reference key="2">
    <citation type="journal article" date="1997" name="Nature">
        <title>The complete genome sequence of the Gram-positive bacterium Bacillus subtilis.</title>
        <authorList>
            <person name="Kunst F."/>
            <person name="Ogasawara N."/>
            <person name="Moszer I."/>
            <person name="Albertini A.M."/>
            <person name="Alloni G."/>
            <person name="Azevedo V."/>
            <person name="Bertero M.G."/>
            <person name="Bessieres P."/>
            <person name="Bolotin A."/>
            <person name="Borchert S."/>
            <person name="Borriss R."/>
            <person name="Boursier L."/>
            <person name="Brans A."/>
            <person name="Braun M."/>
            <person name="Brignell S.C."/>
            <person name="Bron S."/>
            <person name="Brouillet S."/>
            <person name="Bruschi C.V."/>
            <person name="Caldwell B."/>
            <person name="Capuano V."/>
            <person name="Carter N.M."/>
            <person name="Choi S.-K."/>
            <person name="Codani J.-J."/>
            <person name="Connerton I.F."/>
            <person name="Cummings N.J."/>
            <person name="Daniel R.A."/>
            <person name="Denizot F."/>
            <person name="Devine K.M."/>
            <person name="Duesterhoeft A."/>
            <person name="Ehrlich S.D."/>
            <person name="Emmerson P.T."/>
            <person name="Entian K.-D."/>
            <person name="Errington J."/>
            <person name="Fabret C."/>
            <person name="Ferrari E."/>
            <person name="Foulger D."/>
            <person name="Fritz C."/>
            <person name="Fujita M."/>
            <person name="Fujita Y."/>
            <person name="Fuma S."/>
            <person name="Galizzi A."/>
            <person name="Galleron N."/>
            <person name="Ghim S.-Y."/>
            <person name="Glaser P."/>
            <person name="Goffeau A."/>
            <person name="Golightly E.J."/>
            <person name="Grandi G."/>
            <person name="Guiseppi G."/>
            <person name="Guy B.J."/>
            <person name="Haga K."/>
            <person name="Haiech J."/>
            <person name="Harwood C.R."/>
            <person name="Henaut A."/>
            <person name="Hilbert H."/>
            <person name="Holsappel S."/>
            <person name="Hosono S."/>
            <person name="Hullo M.-F."/>
            <person name="Itaya M."/>
            <person name="Jones L.-M."/>
            <person name="Joris B."/>
            <person name="Karamata D."/>
            <person name="Kasahara Y."/>
            <person name="Klaerr-Blanchard M."/>
            <person name="Klein C."/>
            <person name="Kobayashi Y."/>
            <person name="Koetter P."/>
            <person name="Koningstein G."/>
            <person name="Krogh S."/>
            <person name="Kumano M."/>
            <person name="Kurita K."/>
            <person name="Lapidus A."/>
            <person name="Lardinois S."/>
            <person name="Lauber J."/>
            <person name="Lazarevic V."/>
            <person name="Lee S.-M."/>
            <person name="Levine A."/>
            <person name="Liu H."/>
            <person name="Masuda S."/>
            <person name="Mauel C."/>
            <person name="Medigue C."/>
            <person name="Medina N."/>
            <person name="Mellado R.P."/>
            <person name="Mizuno M."/>
            <person name="Moestl D."/>
            <person name="Nakai S."/>
            <person name="Noback M."/>
            <person name="Noone D."/>
            <person name="O'Reilly M."/>
            <person name="Ogawa K."/>
            <person name="Ogiwara A."/>
            <person name="Oudega B."/>
            <person name="Park S.-H."/>
            <person name="Parro V."/>
            <person name="Pohl T.M."/>
            <person name="Portetelle D."/>
            <person name="Porwollik S."/>
            <person name="Prescott A.M."/>
            <person name="Presecan E."/>
            <person name="Pujic P."/>
            <person name="Purnelle B."/>
            <person name="Rapoport G."/>
            <person name="Rey M."/>
            <person name="Reynolds S."/>
            <person name="Rieger M."/>
            <person name="Rivolta C."/>
            <person name="Rocha E."/>
            <person name="Roche B."/>
            <person name="Rose M."/>
            <person name="Sadaie Y."/>
            <person name="Sato T."/>
            <person name="Scanlan E."/>
            <person name="Schleich S."/>
            <person name="Schroeter R."/>
            <person name="Scoffone F."/>
            <person name="Sekiguchi J."/>
            <person name="Sekowska A."/>
            <person name="Seror S.J."/>
            <person name="Serror P."/>
            <person name="Shin B.-S."/>
            <person name="Soldo B."/>
            <person name="Sorokin A."/>
            <person name="Tacconi E."/>
            <person name="Takagi T."/>
            <person name="Takahashi H."/>
            <person name="Takemaru K."/>
            <person name="Takeuchi M."/>
            <person name="Tamakoshi A."/>
            <person name="Tanaka T."/>
            <person name="Terpstra P."/>
            <person name="Tognoni A."/>
            <person name="Tosato V."/>
            <person name="Uchiyama S."/>
            <person name="Vandenbol M."/>
            <person name="Vannier F."/>
            <person name="Vassarotti A."/>
            <person name="Viari A."/>
            <person name="Wambutt R."/>
            <person name="Wedler E."/>
            <person name="Wedler H."/>
            <person name="Weitzenegger T."/>
            <person name="Winters P."/>
            <person name="Wipat A."/>
            <person name="Yamamoto H."/>
            <person name="Yamane K."/>
            <person name="Yasumoto K."/>
            <person name="Yata K."/>
            <person name="Yoshida K."/>
            <person name="Yoshikawa H.-F."/>
            <person name="Zumstein E."/>
            <person name="Yoshikawa H."/>
            <person name="Danchin A."/>
        </authorList>
    </citation>
    <scope>NUCLEOTIDE SEQUENCE [LARGE SCALE GENOMIC DNA]</scope>
    <source>
        <strain>168</strain>
    </source>
</reference>
<reference key="3">
    <citation type="journal article" date="2001" name="Syst. Biol.">
        <title>Genomic and phylogenetic perspectives on the evolution of prokaryotes.</title>
        <authorList>
            <person name="Brown J.R."/>
        </authorList>
    </citation>
    <scope>DISCUSSION OF SEQUENCE</scope>
</reference>
<name>YTPR_BACSU</name>
<gene>
    <name type="primary">ytpR</name>
    <name type="ordered locus">BSU29820</name>
</gene>